<name>Y8381_DICDI</name>
<keyword id="KW-0472">Membrane</keyword>
<keyword id="KW-1185">Reference proteome</keyword>
<keyword id="KW-0812">Transmembrane</keyword>
<keyword id="KW-1133">Transmembrane helix</keyword>
<accession>Q54HM2</accession>
<feature type="chain" id="PRO_0000346950" description="Uncharacterized protein DDB_G0289357">
    <location>
        <begin position="1"/>
        <end position="556"/>
    </location>
</feature>
<feature type="transmembrane region" description="Helical" evidence="1">
    <location>
        <begin position="528"/>
        <end position="548"/>
    </location>
</feature>
<feature type="region of interest" description="Disordered" evidence="2">
    <location>
        <begin position="1"/>
        <end position="40"/>
    </location>
</feature>
<feature type="region of interest" description="Disordered" evidence="2">
    <location>
        <begin position="80"/>
        <end position="243"/>
    </location>
</feature>
<feature type="region of interest" description="Disordered" evidence="2">
    <location>
        <begin position="278"/>
        <end position="324"/>
    </location>
</feature>
<feature type="region of interest" description="Disordered" evidence="2">
    <location>
        <begin position="363"/>
        <end position="391"/>
    </location>
</feature>
<feature type="region of interest" description="Disordered" evidence="2">
    <location>
        <begin position="422"/>
        <end position="525"/>
    </location>
</feature>
<feature type="compositionally biased region" description="Low complexity" evidence="2">
    <location>
        <begin position="7"/>
        <end position="25"/>
    </location>
</feature>
<feature type="compositionally biased region" description="Acidic residues" evidence="2">
    <location>
        <begin position="30"/>
        <end position="40"/>
    </location>
</feature>
<feature type="compositionally biased region" description="Low complexity" evidence="2">
    <location>
        <begin position="80"/>
        <end position="133"/>
    </location>
</feature>
<feature type="compositionally biased region" description="Low complexity" evidence="2">
    <location>
        <begin position="164"/>
        <end position="181"/>
    </location>
</feature>
<feature type="compositionally biased region" description="Acidic residues" evidence="2">
    <location>
        <begin position="182"/>
        <end position="192"/>
    </location>
</feature>
<feature type="compositionally biased region" description="Low complexity" evidence="2">
    <location>
        <begin position="207"/>
        <end position="226"/>
    </location>
</feature>
<feature type="compositionally biased region" description="Polar residues" evidence="2">
    <location>
        <begin position="227"/>
        <end position="243"/>
    </location>
</feature>
<feature type="compositionally biased region" description="Low complexity" evidence="2">
    <location>
        <begin position="292"/>
        <end position="322"/>
    </location>
</feature>
<feature type="compositionally biased region" description="Low complexity" evidence="2">
    <location>
        <begin position="369"/>
        <end position="388"/>
    </location>
</feature>
<feature type="compositionally biased region" description="Low complexity" evidence="2">
    <location>
        <begin position="425"/>
        <end position="525"/>
    </location>
</feature>
<sequence>MSNSDKNNNNNTNNNNNNNNNNNGNFGIWEEPDDDSTNENEELFNNLITKTTKFIDDDEEEEEEESSWDTLYAKHVETSNTTQPFNNSNSNNNNFQTQPTNISTLNPNNNNSNNSSSGSSSSRGVRTPRGTRSNSPPQPSKNETVQKESSGDISEGFTLIDSPNDNNDNKNNNKNNNNDSNIVDDDEDEEEFPTLSKKNQKRKPKKSTSSPSSTSSPIVSPQTQTSKLESSMDVSPSSGKQSWSELLKNVADEDINNNNNNNNNNNSNQYHQEEENYYDSDDYDSSPFAIINNSSTTTNNNNNNNNNTTTTTTTTTTTNSSSLPIVNSQSFEEGEEITSDIKIGIKPKTVTVPFQSTLSLRARTKQIKKVQQQQQQSSKSKPNNNNNKFVDNNPYAVLEEEERALQSAIKASLLLNSPVDLDSKQQNVSQQKQQQEQQPTTTTNSVSSSKSKSVATTDKNRTTSTAVAPTTSSNKKANKSNKTSTANTTATTTTTASSKKNKSNSNKSSNVSNTTTTTSTTENSASEGSFIKNAVIFIFILLLMVVGFKYTQTLNQ</sequence>
<proteinExistence type="predicted"/>
<organism>
    <name type="scientific">Dictyostelium discoideum</name>
    <name type="common">Social amoeba</name>
    <dbReference type="NCBI Taxonomy" id="44689"/>
    <lineage>
        <taxon>Eukaryota</taxon>
        <taxon>Amoebozoa</taxon>
        <taxon>Evosea</taxon>
        <taxon>Eumycetozoa</taxon>
        <taxon>Dictyostelia</taxon>
        <taxon>Dictyosteliales</taxon>
        <taxon>Dictyosteliaceae</taxon>
        <taxon>Dictyostelium</taxon>
    </lineage>
</organism>
<comment type="subcellular location">
    <subcellularLocation>
        <location evidence="3">Membrane</location>
        <topology evidence="3">Single-pass membrane protein</topology>
    </subcellularLocation>
</comment>
<reference key="1">
    <citation type="journal article" date="2005" name="Nature">
        <title>The genome of the social amoeba Dictyostelium discoideum.</title>
        <authorList>
            <person name="Eichinger L."/>
            <person name="Pachebat J.A."/>
            <person name="Gloeckner G."/>
            <person name="Rajandream M.A."/>
            <person name="Sucgang R."/>
            <person name="Berriman M."/>
            <person name="Song J."/>
            <person name="Olsen R."/>
            <person name="Szafranski K."/>
            <person name="Xu Q."/>
            <person name="Tunggal B."/>
            <person name="Kummerfeld S."/>
            <person name="Madera M."/>
            <person name="Konfortov B.A."/>
            <person name="Rivero F."/>
            <person name="Bankier A.T."/>
            <person name="Lehmann R."/>
            <person name="Hamlin N."/>
            <person name="Davies R."/>
            <person name="Gaudet P."/>
            <person name="Fey P."/>
            <person name="Pilcher K."/>
            <person name="Chen G."/>
            <person name="Saunders D."/>
            <person name="Sodergren E.J."/>
            <person name="Davis P."/>
            <person name="Kerhornou A."/>
            <person name="Nie X."/>
            <person name="Hall N."/>
            <person name="Anjard C."/>
            <person name="Hemphill L."/>
            <person name="Bason N."/>
            <person name="Farbrother P."/>
            <person name="Desany B."/>
            <person name="Just E."/>
            <person name="Morio T."/>
            <person name="Rost R."/>
            <person name="Churcher C.M."/>
            <person name="Cooper J."/>
            <person name="Haydock S."/>
            <person name="van Driessche N."/>
            <person name="Cronin A."/>
            <person name="Goodhead I."/>
            <person name="Muzny D.M."/>
            <person name="Mourier T."/>
            <person name="Pain A."/>
            <person name="Lu M."/>
            <person name="Harper D."/>
            <person name="Lindsay R."/>
            <person name="Hauser H."/>
            <person name="James K.D."/>
            <person name="Quiles M."/>
            <person name="Madan Babu M."/>
            <person name="Saito T."/>
            <person name="Buchrieser C."/>
            <person name="Wardroper A."/>
            <person name="Felder M."/>
            <person name="Thangavelu M."/>
            <person name="Johnson D."/>
            <person name="Knights A."/>
            <person name="Loulseged H."/>
            <person name="Mungall K.L."/>
            <person name="Oliver K."/>
            <person name="Price C."/>
            <person name="Quail M.A."/>
            <person name="Urushihara H."/>
            <person name="Hernandez J."/>
            <person name="Rabbinowitsch E."/>
            <person name="Steffen D."/>
            <person name="Sanders M."/>
            <person name="Ma J."/>
            <person name="Kohara Y."/>
            <person name="Sharp S."/>
            <person name="Simmonds M.N."/>
            <person name="Spiegler S."/>
            <person name="Tivey A."/>
            <person name="Sugano S."/>
            <person name="White B."/>
            <person name="Walker D."/>
            <person name="Woodward J.R."/>
            <person name="Winckler T."/>
            <person name="Tanaka Y."/>
            <person name="Shaulsky G."/>
            <person name="Schleicher M."/>
            <person name="Weinstock G.M."/>
            <person name="Rosenthal A."/>
            <person name="Cox E.C."/>
            <person name="Chisholm R.L."/>
            <person name="Gibbs R.A."/>
            <person name="Loomis W.F."/>
            <person name="Platzer M."/>
            <person name="Kay R.R."/>
            <person name="Williams J.G."/>
            <person name="Dear P.H."/>
            <person name="Noegel A.A."/>
            <person name="Barrell B.G."/>
            <person name="Kuspa A."/>
        </authorList>
    </citation>
    <scope>NUCLEOTIDE SEQUENCE [LARGE SCALE GENOMIC DNA]</scope>
    <source>
        <strain>AX4</strain>
    </source>
</reference>
<protein>
    <recommendedName>
        <fullName>Uncharacterized protein DDB_G0289357</fullName>
    </recommendedName>
</protein>
<dbReference type="EMBL" id="AAFI02000139">
    <property type="protein sequence ID" value="EAL62765.1"/>
    <property type="molecule type" value="Genomic_DNA"/>
</dbReference>
<dbReference type="RefSeq" id="XP_636279.1">
    <property type="nucleotide sequence ID" value="XM_631187.1"/>
</dbReference>
<dbReference type="SMR" id="Q54HM2"/>
<dbReference type="BioGRID" id="1252100">
    <property type="interactions" value="1"/>
</dbReference>
<dbReference type="STRING" id="44689.Q54HM2"/>
<dbReference type="GlyGen" id="Q54HM2">
    <property type="glycosylation" value="1 site"/>
</dbReference>
<dbReference type="PaxDb" id="44689-DDB0188381"/>
<dbReference type="EnsemblProtists" id="EAL62765">
    <property type="protein sequence ID" value="EAL62765"/>
    <property type="gene ID" value="DDB_G0289357"/>
</dbReference>
<dbReference type="GeneID" id="8627097"/>
<dbReference type="KEGG" id="ddi:DDB_G0289357"/>
<dbReference type="dictyBase" id="DDB_G0289357"/>
<dbReference type="VEuPathDB" id="AmoebaDB:DDB_G0289357"/>
<dbReference type="eggNOG" id="ENOG502RHVQ">
    <property type="taxonomic scope" value="Eukaryota"/>
</dbReference>
<dbReference type="HOGENOM" id="CLU_490423_0_0_1"/>
<dbReference type="InParanoid" id="Q54HM2"/>
<dbReference type="OMA" id="KTAWINC"/>
<dbReference type="PRO" id="PR:Q54HM2"/>
<dbReference type="Proteomes" id="UP000002195">
    <property type="component" value="Chromosome 5"/>
</dbReference>
<dbReference type="GO" id="GO:0016020">
    <property type="term" value="C:membrane"/>
    <property type="evidence" value="ECO:0007669"/>
    <property type="project" value="UniProtKB-SubCell"/>
</dbReference>
<gene>
    <name type="ORF">DDB_G0289357</name>
</gene>
<evidence type="ECO:0000255" key="1"/>
<evidence type="ECO:0000256" key="2">
    <source>
        <dbReference type="SAM" id="MobiDB-lite"/>
    </source>
</evidence>
<evidence type="ECO:0000305" key="3"/>